<proteinExistence type="inferred from homology"/>
<organism>
    <name type="scientific">Marinobacter nauticus (strain ATCC 700491 / DSM 11845 / VT8)</name>
    <name type="common">Marinobacter aquaeolei</name>
    <dbReference type="NCBI Taxonomy" id="351348"/>
    <lineage>
        <taxon>Bacteria</taxon>
        <taxon>Pseudomonadati</taxon>
        <taxon>Pseudomonadota</taxon>
        <taxon>Gammaproteobacteria</taxon>
        <taxon>Pseudomonadales</taxon>
        <taxon>Marinobacteraceae</taxon>
        <taxon>Marinobacter</taxon>
    </lineage>
</organism>
<feature type="chain" id="PRO_0000292068" description="Probable chorismate pyruvate-lyase">
    <location>
        <begin position="1"/>
        <end position="188"/>
    </location>
</feature>
<feature type="binding site" evidence="1">
    <location>
        <position position="90"/>
    </location>
    <ligand>
        <name>substrate</name>
    </ligand>
</feature>
<feature type="binding site" evidence="1">
    <location>
        <position position="128"/>
    </location>
    <ligand>
        <name>substrate</name>
    </ligand>
</feature>
<feature type="binding site" evidence="1">
    <location>
        <position position="175"/>
    </location>
    <ligand>
        <name>substrate</name>
    </ligand>
</feature>
<protein>
    <recommendedName>
        <fullName evidence="1">Probable chorismate pyruvate-lyase</fullName>
        <shortName evidence="1">CL</shortName>
        <shortName evidence="1">CPL</shortName>
        <ecNumber evidence="1">4.1.3.40</ecNumber>
    </recommendedName>
</protein>
<keyword id="KW-0963">Cytoplasm</keyword>
<keyword id="KW-0456">Lyase</keyword>
<keyword id="KW-0670">Pyruvate</keyword>
<keyword id="KW-0831">Ubiquinone biosynthesis</keyword>
<comment type="function">
    <text evidence="1">Removes the pyruvyl group from chorismate, with concomitant aromatization of the ring, to provide 4-hydroxybenzoate (4HB) for the ubiquinone pathway.</text>
</comment>
<comment type="catalytic activity">
    <reaction evidence="1">
        <text>chorismate = 4-hydroxybenzoate + pyruvate</text>
        <dbReference type="Rhea" id="RHEA:16505"/>
        <dbReference type="ChEBI" id="CHEBI:15361"/>
        <dbReference type="ChEBI" id="CHEBI:17879"/>
        <dbReference type="ChEBI" id="CHEBI:29748"/>
        <dbReference type="EC" id="4.1.3.40"/>
    </reaction>
</comment>
<comment type="pathway">
    <text evidence="1">Cofactor biosynthesis; ubiquinone biosynthesis.</text>
</comment>
<comment type="subcellular location">
    <subcellularLocation>
        <location evidence="1">Cytoplasm</location>
    </subcellularLocation>
</comment>
<comment type="similarity">
    <text evidence="1">Belongs to the UbiC family.</text>
</comment>
<name>UBIC_MARN8</name>
<reference key="1">
    <citation type="journal article" date="2011" name="Appl. Environ. Microbiol.">
        <title>Genomic potential of Marinobacter aquaeolei, a biogeochemical 'opportunitroph'.</title>
        <authorList>
            <person name="Singer E."/>
            <person name="Webb E.A."/>
            <person name="Nelson W.C."/>
            <person name="Heidelberg J.F."/>
            <person name="Ivanova N."/>
            <person name="Pati A."/>
            <person name="Edwards K.J."/>
        </authorList>
    </citation>
    <scope>NUCLEOTIDE SEQUENCE [LARGE SCALE GENOMIC DNA]</scope>
    <source>
        <strain>ATCC 700491 / DSM 11845 / VT8</strain>
    </source>
</reference>
<gene>
    <name evidence="1" type="primary">ubiC</name>
    <name type="ordered locus">Maqu_3594</name>
</gene>
<accession>A1U6P4</accession>
<dbReference type="EC" id="4.1.3.40" evidence="1"/>
<dbReference type="EMBL" id="CP000514">
    <property type="protein sequence ID" value="ABM20663.1"/>
    <property type="molecule type" value="Genomic_DNA"/>
</dbReference>
<dbReference type="RefSeq" id="WP_011787002.1">
    <property type="nucleotide sequence ID" value="NC_008740.1"/>
</dbReference>
<dbReference type="SMR" id="A1U6P4"/>
<dbReference type="STRING" id="351348.Maqu_3594"/>
<dbReference type="KEGG" id="maq:Maqu_3594"/>
<dbReference type="eggNOG" id="COG3161">
    <property type="taxonomic scope" value="Bacteria"/>
</dbReference>
<dbReference type="HOGENOM" id="CLU_096824_3_0_6"/>
<dbReference type="OrthoDB" id="9789493at2"/>
<dbReference type="UniPathway" id="UPA00232"/>
<dbReference type="Proteomes" id="UP000000998">
    <property type="component" value="Chromosome"/>
</dbReference>
<dbReference type="GO" id="GO:0005829">
    <property type="term" value="C:cytosol"/>
    <property type="evidence" value="ECO:0007669"/>
    <property type="project" value="TreeGrafter"/>
</dbReference>
<dbReference type="GO" id="GO:0008813">
    <property type="term" value="F:chorismate lyase activity"/>
    <property type="evidence" value="ECO:0007669"/>
    <property type="project" value="UniProtKB-UniRule"/>
</dbReference>
<dbReference type="GO" id="GO:0042866">
    <property type="term" value="P:pyruvate biosynthetic process"/>
    <property type="evidence" value="ECO:0007669"/>
    <property type="project" value="UniProtKB-UniRule"/>
</dbReference>
<dbReference type="GO" id="GO:0006744">
    <property type="term" value="P:ubiquinone biosynthetic process"/>
    <property type="evidence" value="ECO:0007669"/>
    <property type="project" value="UniProtKB-UniRule"/>
</dbReference>
<dbReference type="Gene3D" id="3.40.1410.10">
    <property type="entry name" value="Chorismate lyase-like"/>
    <property type="match status" value="1"/>
</dbReference>
<dbReference type="HAMAP" id="MF_01632">
    <property type="entry name" value="UbiC"/>
    <property type="match status" value="1"/>
</dbReference>
<dbReference type="InterPro" id="IPR007440">
    <property type="entry name" value="Chorismate--pyruvate_lyase"/>
</dbReference>
<dbReference type="InterPro" id="IPR028978">
    <property type="entry name" value="Chorismate_lyase_/UTRA_dom_sf"/>
</dbReference>
<dbReference type="PANTHER" id="PTHR38683">
    <property type="entry name" value="CHORISMATE PYRUVATE-LYASE"/>
    <property type="match status" value="1"/>
</dbReference>
<dbReference type="PANTHER" id="PTHR38683:SF1">
    <property type="entry name" value="CHORISMATE PYRUVATE-LYASE"/>
    <property type="match status" value="1"/>
</dbReference>
<dbReference type="Pfam" id="PF04345">
    <property type="entry name" value="Chor_lyase"/>
    <property type="match status" value="1"/>
</dbReference>
<dbReference type="SUPFAM" id="SSF64288">
    <property type="entry name" value="Chorismate lyase-like"/>
    <property type="match status" value="1"/>
</dbReference>
<sequence>MPLKDCDQPPELSIPPTFWYRSLVAAGLYCPEVHGPARYWLTVEGSFTRALQQKCQERFHVEILREGFSTPTPEEAKRLNLAPRQLAWVREVRLCGDGRPWVLARTVIPQTCLHGHGRRLRNLGNKPLGAYLFSSPEWQRGPLETGLCKARSNGHPRLARRSLFHRGSCALLVGEYLLPRLYQSPNRG</sequence>
<evidence type="ECO:0000255" key="1">
    <source>
        <dbReference type="HAMAP-Rule" id="MF_01632"/>
    </source>
</evidence>